<keyword id="KW-0325">Glycoprotein</keyword>
<keyword id="KW-0677">Repeat</keyword>
<keyword id="KW-0732">Signal</keyword>
<gene>
    <name evidence="7" type="primary">elcF</name>
    <name type="ORF">SNOG_08615</name>
</gene>
<accession>Q0UHZ9</accession>
<dbReference type="EMBL" id="CH445337">
    <property type="protein sequence ID" value="EAT83783.1"/>
    <property type="molecule type" value="Genomic_DNA"/>
</dbReference>
<dbReference type="RefSeq" id="XP_001798924.1">
    <property type="nucleotide sequence ID" value="XM_001798872.1"/>
</dbReference>
<dbReference type="SMR" id="Q0UHZ9"/>
<dbReference type="STRING" id="321614.Q0UHZ9"/>
<dbReference type="GlyCosmos" id="Q0UHZ9">
    <property type="glycosylation" value="5 sites, No reported glycans"/>
</dbReference>
<dbReference type="EnsemblFungi" id="SNOT_08615">
    <property type="protein sequence ID" value="SNOT_08615"/>
    <property type="gene ID" value="SNOG_08615"/>
</dbReference>
<dbReference type="GeneID" id="5975823"/>
<dbReference type="KEGG" id="pno:SNOG_08615"/>
<dbReference type="VEuPathDB" id="FungiDB:JI435_086150"/>
<dbReference type="eggNOG" id="KOG1437">
    <property type="taxonomic scope" value="Eukaryota"/>
</dbReference>
<dbReference type="HOGENOM" id="CLU_031281_2_0_1"/>
<dbReference type="InParanoid" id="Q0UHZ9"/>
<dbReference type="OMA" id="RVECGIQ"/>
<dbReference type="OrthoDB" id="286301at2759"/>
<dbReference type="Proteomes" id="UP000001055">
    <property type="component" value="Unassembled WGS sequence"/>
</dbReference>
<dbReference type="GO" id="GO:0005615">
    <property type="term" value="C:extracellular space"/>
    <property type="evidence" value="ECO:0000318"/>
    <property type="project" value="GO_Central"/>
</dbReference>
<dbReference type="FunFam" id="2.30.180.10:FF:000064">
    <property type="entry name" value="Uncharacterized protein"/>
    <property type="match status" value="1"/>
</dbReference>
<dbReference type="Gene3D" id="2.30.180.10">
    <property type="entry name" value="FAS1 domain"/>
    <property type="match status" value="2"/>
</dbReference>
<dbReference type="InterPro" id="IPR050904">
    <property type="entry name" value="Adhesion/Biosynth-related"/>
</dbReference>
<dbReference type="InterPro" id="IPR036378">
    <property type="entry name" value="FAS1_dom_sf"/>
</dbReference>
<dbReference type="InterPro" id="IPR000782">
    <property type="entry name" value="FAS1_domain"/>
</dbReference>
<dbReference type="PANTHER" id="PTHR10900:SF77">
    <property type="entry name" value="FI19380P1"/>
    <property type="match status" value="1"/>
</dbReference>
<dbReference type="PANTHER" id="PTHR10900">
    <property type="entry name" value="PERIOSTIN-RELATED"/>
    <property type="match status" value="1"/>
</dbReference>
<dbReference type="Pfam" id="PF02469">
    <property type="entry name" value="Fasciclin"/>
    <property type="match status" value="2"/>
</dbReference>
<dbReference type="SMART" id="SM00554">
    <property type="entry name" value="FAS1"/>
    <property type="match status" value="2"/>
</dbReference>
<dbReference type="SUPFAM" id="SSF82153">
    <property type="entry name" value="FAS1 domain"/>
    <property type="match status" value="2"/>
</dbReference>
<dbReference type="PROSITE" id="PS50213">
    <property type="entry name" value="FAS1"/>
    <property type="match status" value="2"/>
</dbReference>
<feature type="signal peptide" evidence="2">
    <location>
        <begin position="1"/>
        <end position="16"/>
    </location>
</feature>
<feature type="chain" id="PRO_5004178039" description="Fasciclin-like arabinogalactan protein elcF">
    <location>
        <begin position="17"/>
        <end position="312"/>
    </location>
</feature>
<feature type="domain" description="FAS1 1" evidence="3">
    <location>
        <begin position="17"/>
        <end position="160"/>
    </location>
</feature>
<feature type="domain" description="FAS1 2" evidence="3">
    <location>
        <begin position="162"/>
        <end position="289"/>
    </location>
</feature>
<feature type="glycosylation site" description="N-linked (GlcNAc...) asparagine" evidence="4">
    <location>
        <position position="48"/>
    </location>
</feature>
<feature type="glycosylation site" description="N-linked (GlcNAc...) asparagine" evidence="4">
    <location>
        <position position="68"/>
    </location>
</feature>
<feature type="glycosylation site" description="N-linked (GlcNAc...) asparagine" evidence="4">
    <location>
        <position position="113"/>
    </location>
</feature>
<feature type="glycosylation site" description="N-linked (GlcNAc...) asparagine" evidence="4">
    <location>
        <position position="157"/>
    </location>
</feature>
<feature type="glycosylation site" description="N-linked (GlcNAc...) asparagine" evidence="4">
    <location>
        <position position="165"/>
    </location>
</feature>
<sequence>MKLFTLLLPALTSAHSLSTLLSTHPTLSTLHSLLKQFSLLDDFNTLANITVIAPTNQAYLDLANWGFNVSQIPAPVARALFQYHVLDGEWESESIIGKGKVVHTYLKPPVLTNVTAGAAVKLSSVDGTIMTESGLGVAGGVEDVNLRFDGGVLHTLNASMVLPHNITLTAQINGLGRFLELMNRAGVVAEFEGLKDVTVFVPHDDALEKADVGKMSKEQLASLLRGHVVPNRVLYGEVFGKKGGYKSSNGWEIHVGKTADGTLTVNGIKVVKEDVILYAGVAHVIDKVLVADRVEHKGDRSYLHLDAQKPLR</sequence>
<organism>
    <name type="scientific">Phaeosphaeria nodorum (strain SN15 / ATCC MYA-4574 / FGSC 10173)</name>
    <name type="common">Glume blotch fungus</name>
    <name type="synonym">Parastagonospora nodorum</name>
    <dbReference type="NCBI Taxonomy" id="321614"/>
    <lineage>
        <taxon>Eukaryota</taxon>
        <taxon>Fungi</taxon>
        <taxon>Dikarya</taxon>
        <taxon>Ascomycota</taxon>
        <taxon>Pezizomycotina</taxon>
        <taxon>Dothideomycetes</taxon>
        <taxon>Pleosporomycetidae</taxon>
        <taxon>Pleosporales</taxon>
        <taxon>Pleosporineae</taxon>
        <taxon>Phaeosphaeriaceae</taxon>
        <taxon>Parastagonospora</taxon>
    </lineage>
</organism>
<comment type="function">
    <text evidence="1 5 6 9">Fasciclin-like arabinogalactan protein; part of the gene cluster that mediates the biosynthesis of elsinochrome C, a perelyenequinone phytotoxin structurally similar to cercosporin (PubMed:28251756, PubMed:30809363). The first step of elsinochrome C biosynthesis is performed by the polyketide synthase elcA which catalyzes the formation of nor-toralactone (PubMed:28251756, PubMed:30809363). The starter unit acyltransferase (SAT) domain of elcA initiates polyketide extension by the selective utilization of acetyl-CoA, which is elongated to the heptaketide in the beta-ketoacyl synthase (KS) domain by successive condensations with six malonyl units introduced by the malonyl acyltransferase (MAT) domain (By similarity). The product template (PT) domain catalyzes C4-C9 and C2-C11 aldol cyclizations and dehydrations to a trihydroxynaphthalene, which is thought to be delivered to the thioesterase (TE) domain for product release (By similarity). The bifunctional enzyme elcB then methylates nor-toralactone to toralactone before conducting an unusual oxidative aromatic ring opening (PubMed:28251756, PubMed:30809363). The next step in perylenequinone biosynthesis is an O-methylation at the nascent OH-6 of the elcB product performed by the O-methyltransferase elcD (PubMed:30809363). The oxidative coupling of the two monomeric naphthol units in perylenequinone biosynthesis is catalyzed by the FAD-dependent monooxygenase elcE and the multicopper oxidase elcG (PubMed:30809363). ElcG might catalyze the first intermolecular coupling in a regio- and stereo-selective manner via a phenol radical coupling mechanism and the elcE could forge the second C-C bond intramolecularly via a hydride transfer mechanism (PubMed:30809363). The fasciclin domain-containing protein elcF might also play a role duting this step (Probable). The last piece of the puzzle in the biosynthesis of elsinochrome C is the additional annulation by enolate coupling to afford the dihydrobenzo(ghi)perylenequinone system, catalyzed by the FAD-dependent monooxygenase elcH (PubMed:30809363).</text>
</comment>
<comment type="pathway">
    <text evidence="5 6">Secondary metabolite biosynthesis.</text>
</comment>
<comment type="induction">
    <text evidence="5">Expression is up-regulated during the late stage of P.nodorum wheat leaf infection and is controlled by the cluster specific transporter elcR.</text>
</comment>
<comment type="similarity">
    <text evidence="8">Belongs to the fasciclin-like AGP family.</text>
</comment>
<protein>
    <recommendedName>
        <fullName evidence="7">Fasciclin-like arabinogalactan protein elcF</fullName>
    </recommendedName>
    <alternativeName>
        <fullName evidence="7">Elsinochrome C biosynthesis cluster protein F</fullName>
    </alternativeName>
</protein>
<reference key="1">
    <citation type="journal article" date="2007" name="Plant Cell">
        <title>Dothideomycete-plant interactions illuminated by genome sequencing and EST analysis of the wheat pathogen Stagonospora nodorum.</title>
        <authorList>
            <person name="Hane J.K."/>
            <person name="Lowe R.G.T."/>
            <person name="Solomon P.S."/>
            <person name="Tan K.-C."/>
            <person name="Schoch C.L."/>
            <person name="Spatafora J.W."/>
            <person name="Crous P.W."/>
            <person name="Kodira C.D."/>
            <person name="Birren B.W."/>
            <person name="Galagan J.E."/>
            <person name="Torriani S.F.F."/>
            <person name="McDonald B.A."/>
            <person name="Oliver R.P."/>
        </authorList>
    </citation>
    <scope>NUCLEOTIDE SEQUENCE [LARGE SCALE GENOMIC DNA]</scope>
    <source>
        <strain>SN15 / ATCC MYA-4574 / FGSC 10173</strain>
    </source>
</reference>
<reference key="2">
    <citation type="journal article" date="2017" name="Environ. Microbiol.">
        <title>Functional genomics-guided discovery of a light-activated phytotoxin in the wheat pathogen Parastagonospora nodorum via pathway activation.</title>
        <authorList>
            <person name="Chooi Y.H."/>
            <person name="Zhang G."/>
            <person name="Hu J."/>
            <person name="Muria-Gonzalez M.J."/>
            <person name="Tran P.N."/>
            <person name="Pettitt A."/>
            <person name="Maier A.G."/>
            <person name="Barrow R.A."/>
            <person name="Solomon P.S."/>
        </authorList>
    </citation>
    <scope>INDUCTION</scope>
    <scope>FUNCTION</scope>
    <scope>PATHWAY</scope>
</reference>
<reference key="3">
    <citation type="journal article" date="2019" name="Chem. Sci.">
        <title>Heterologous biosynthesis of elsinochrome A sheds light on the formation of the photosensitive perylenequinone system.</title>
        <authorList>
            <person name="Hu J."/>
            <person name="Sarrami F."/>
            <person name="Li H."/>
            <person name="Zhang G."/>
            <person name="Stubbs K.A."/>
            <person name="Lacey E."/>
            <person name="Stewart S.G."/>
            <person name="Karton A."/>
            <person name="Piggott A.M."/>
            <person name="Chooi Y.H."/>
        </authorList>
    </citation>
    <scope>FUNCTION</scope>
    <scope>PATHWAY</scope>
</reference>
<proteinExistence type="evidence at transcript level"/>
<name>ELCF_PHANO</name>
<evidence type="ECO:0000250" key="1">
    <source>
        <dbReference type="UniProtKB" id="Q6DQW3"/>
    </source>
</evidence>
<evidence type="ECO:0000255" key="2"/>
<evidence type="ECO:0000255" key="3">
    <source>
        <dbReference type="PROSITE-ProRule" id="PRU00082"/>
    </source>
</evidence>
<evidence type="ECO:0000255" key="4">
    <source>
        <dbReference type="PROSITE-ProRule" id="PRU00498"/>
    </source>
</evidence>
<evidence type="ECO:0000269" key="5">
    <source>
    </source>
</evidence>
<evidence type="ECO:0000269" key="6">
    <source>
    </source>
</evidence>
<evidence type="ECO:0000303" key="7">
    <source>
    </source>
</evidence>
<evidence type="ECO:0000305" key="8"/>
<evidence type="ECO:0000305" key="9">
    <source>
    </source>
</evidence>